<sequence length="249" mass="26832">MFHGKHPGGLSERGRALLLEGGKALGLDLKPHLEAFSRLYALLQEASGKVNLTALRGEEEVVVKHFLDSLTLLRLPLWQGPLRVLDLGTGAGFPGLPLKIVRPELELVLVDATRKKVAFVERAIEVLGLKGARALWGRAEVLAREAGHREAYARAVARAVAPLCVLSELLLPFLEVGGAAVAMKGPRVEEELAPLPPALERLGGRLGEVLALQLPLSGEARHLVVLEKTAPTPPAYPRRPGVPERHPLC</sequence>
<organism>
    <name type="scientific">Thermus thermophilus (strain ATCC 27634 / DSM 579 / HB8)</name>
    <dbReference type="NCBI Taxonomy" id="300852"/>
    <lineage>
        <taxon>Bacteria</taxon>
        <taxon>Thermotogati</taxon>
        <taxon>Deinococcota</taxon>
        <taxon>Deinococci</taxon>
        <taxon>Thermales</taxon>
        <taxon>Thermaceae</taxon>
        <taxon>Thermus</taxon>
    </lineage>
</organism>
<dbReference type="EC" id="2.1.1.170" evidence="2"/>
<dbReference type="EMBL" id="AJ277593">
    <property type="protein sequence ID" value="CAB89206.1"/>
    <property type="status" value="ALT_INIT"/>
    <property type="molecule type" value="Genomic_DNA"/>
</dbReference>
<dbReference type="EMBL" id="AP008226">
    <property type="protein sequence ID" value="BAD71794.1"/>
    <property type="molecule type" value="Genomic_DNA"/>
</dbReference>
<dbReference type="RefSeq" id="WP_011229055.1">
    <property type="nucleotide sequence ID" value="NC_006461.1"/>
</dbReference>
<dbReference type="RefSeq" id="YP_145237.1">
    <property type="nucleotide sequence ID" value="NC_006461.1"/>
</dbReference>
<dbReference type="PDB" id="3G88">
    <property type="method" value="X-ray"/>
    <property type="resolution" value="1.87 A"/>
    <property type="chains" value="A/B=1-249"/>
</dbReference>
<dbReference type="PDB" id="3G89">
    <property type="method" value="X-ray"/>
    <property type="resolution" value="1.50 A"/>
    <property type="chains" value="A/B=1-249"/>
</dbReference>
<dbReference type="PDB" id="3G8A">
    <property type="method" value="X-ray"/>
    <property type="resolution" value="2.10 A"/>
    <property type="chains" value="A/B/C/D/E/F=1-249"/>
</dbReference>
<dbReference type="PDB" id="3G8B">
    <property type="method" value="X-ray"/>
    <property type="resolution" value="2.10 A"/>
    <property type="chains" value="A/B=1-249"/>
</dbReference>
<dbReference type="PDBsum" id="3G88"/>
<dbReference type="PDBsum" id="3G89"/>
<dbReference type="PDBsum" id="3G8A"/>
<dbReference type="PDBsum" id="3G8B"/>
<dbReference type="SMR" id="Q9LCY2"/>
<dbReference type="EnsemblBacteria" id="BAD71794">
    <property type="protein sequence ID" value="BAD71794"/>
    <property type="gene ID" value="BAD71794"/>
</dbReference>
<dbReference type="GeneID" id="3169844"/>
<dbReference type="KEGG" id="ttj:TTHA1971"/>
<dbReference type="PATRIC" id="fig|300852.9.peg.1942"/>
<dbReference type="eggNOG" id="COG0357">
    <property type="taxonomic scope" value="Bacteria"/>
</dbReference>
<dbReference type="HOGENOM" id="CLU_065341_0_1_0"/>
<dbReference type="PhylomeDB" id="Q9LCY2"/>
<dbReference type="BRENDA" id="2.1.1.170">
    <property type="organism ID" value="2305"/>
</dbReference>
<dbReference type="EvolutionaryTrace" id="Q9LCY2"/>
<dbReference type="Proteomes" id="UP000000532">
    <property type="component" value="Chromosome"/>
</dbReference>
<dbReference type="GO" id="GO:0005829">
    <property type="term" value="C:cytosol"/>
    <property type="evidence" value="ECO:0007669"/>
    <property type="project" value="TreeGrafter"/>
</dbReference>
<dbReference type="GO" id="GO:0070043">
    <property type="term" value="F:rRNA (guanine-N7-)-methyltransferase activity"/>
    <property type="evidence" value="ECO:0007669"/>
    <property type="project" value="UniProtKB-UniRule"/>
</dbReference>
<dbReference type="FunFam" id="3.40.50.150:FF:000041">
    <property type="entry name" value="Ribosomal RNA small subunit methyltransferase G"/>
    <property type="match status" value="1"/>
</dbReference>
<dbReference type="Gene3D" id="3.40.50.150">
    <property type="entry name" value="Vaccinia Virus protein VP39"/>
    <property type="match status" value="1"/>
</dbReference>
<dbReference type="HAMAP" id="MF_00074">
    <property type="entry name" value="16SrRNA_methyltr_G"/>
    <property type="match status" value="1"/>
</dbReference>
<dbReference type="InterPro" id="IPR003682">
    <property type="entry name" value="rRNA_ssu_MeTfrase_G"/>
</dbReference>
<dbReference type="InterPro" id="IPR029063">
    <property type="entry name" value="SAM-dependent_MTases_sf"/>
</dbReference>
<dbReference type="NCBIfam" id="TIGR00138">
    <property type="entry name" value="rsmG_gidB"/>
    <property type="match status" value="1"/>
</dbReference>
<dbReference type="PANTHER" id="PTHR31760">
    <property type="entry name" value="S-ADENOSYL-L-METHIONINE-DEPENDENT METHYLTRANSFERASES SUPERFAMILY PROTEIN"/>
    <property type="match status" value="1"/>
</dbReference>
<dbReference type="PANTHER" id="PTHR31760:SF0">
    <property type="entry name" value="S-ADENOSYL-L-METHIONINE-DEPENDENT METHYLTRANSFERASES SUPERFAMILY PROTEIN"/>
    <property type="match status" value="1"/>
</dbReference>
<dbReference type="Pfam" id="PF02527">
    <property type="entry name" value="GidB"/>
    <property type="match status" value="1"/>
</dbReference>
<dbReference type="PIRSF" id="PIRSF003078">
    <property type="entry name" value="GidB"/>
    <property type="match status" value="1"/>
</dbReference>
<dbReference type="SUPFAM" id="SSF53335">
    <property type="entry name" value="S-adenosyl-L-methionine-dependent methyltransferases"/>
    <property type="match status" value="1"/>
</dbReference>
<reference key="1">
    <citation type="journal article" date="2000" name="Gene">
        <title>Identification and characterization of the dnaA upstream region of Thermus thermophilus.</title>
        <authorList>
            <person name="Nardmann J."/>
            <person name="Messer W."/>
        </authorList>
    </citation>
    <scope>NUCLEOTIDE SEQUENCE [GENOMIC DNA]</scope>
    <source>
        <strain>ATCC 27634 / DSM 579 / HB8</strain>
    </source>
</reference>
<reference key="2">
    <citation type="submission" date="2004-11" db="EMBL/GenBank/DDBJ databases">
        <title>Complete genome sequence of Thermus thermophilus HB8.</title>
        <authorList>
            <person name="Masui R."/>
            <person name="Kurokawa K."/>
            <person name="Nakagawa N."/>
            <person name="Tokunaga F."/>
            <person name="Koyama Y."/>
            <person name="Shibata T."/>
            <person name="Oshima T."/>
            <person name="Yokoyama S."/>
            <person name="Yasunaga T."/>
            <person name="Kuramitsu S."/>
        </authorList>
    </citation>
    <scope>NUCLEOTIDE SEQUENCE [LARGE SCALE GENOMIC DNA]</scope>
    <source>
        <strain>ATCC 27634 / DSM 579 / HB8</strain>
    </source>
</reference>
<reference key="3">
    <citation type="journal article" date="2009" name="RNA">
        <title>Structural and functional studies of the Thermus thermophilus 16S rRNA methyltransferase RsmG.</title>
        <authorList>
            <person name="Gregory S.T."/>
            <person name="Demirci H."/>
            <person name="Belardinelli R."/>
            <person name="Monshupanee T."/>
            <person name="Gualerzi C."/>
            <person name="Dahlberg A.E."/>
            <person name="Jogl G."/>
        </authorList>
    </citation>
    <scope>X-RAY CRYSTALLOGRAPHY (1.50 ANGSTROMS) IN COMPLEXES WITH AMP; S-ADENOSYL-L-HOMOCYSTEINE AND S-ADENOSYL-L-METHIONINE</scope>
    <scope>FUNCTION</scope>
    <scope>DISRUPTION PHENOTYPE</scope>
    <scope>DISULFIDE BOND</scope>
    <source>
        <strain>ATCC 27634 / DSM 579 / HB8</strain>
    </source>
</reference>
<name>RSMG_THET8</name>
<keyword id="KW-0002">3D-structure</keyword>
<keyword id="KW-0963">Cytoplasm</keyword>
<keyword id="KW-1015">Disulfide bond</keyword>
<keyword id="KW-0489">Methyltransferase</keyword>
<keyword id="KW-1185">Reference proteome</keyword>
<keyword id="KW-0698">rRNA processing</keyword>
<keyword id="KW-0949">S-adenosyl-L-methionine</keyword>
<keyword id="KW-0808">Transferase</keyword>
<comment type="function">
    <text evidence="2 3">Specifically methylates the N7 position of guanine in position 527 of 16S rRNA. Shows a marked preference for deproteinized 16S rRNA as substrate and is completely inactive with native 30S subunits as substrate.</text>
</comment>
<comment type="catalytic activity">
    <reaction evidence="2">
        <text>guanosine(527) in 16S rRNA + S-adenosyl-L-methionine = N(7)-methylguanosine(527) in 16S rRNA + S-adenosyl-L-homocysteine</text>
        <dbReference type="Rhea" id="RHEA:42732"/>
        <dbReference type="Rhea" id="RHEA-COMP:10209"/>
        <dbReference type="Rhea" id="RHEA-COMP:10210"/>
        <dbReference type="ChEBI" id="CHEBI:57856"/>
        <dbReference type="ChEBI" id="CHEBI:59789"/>
        <dbReference type="ChEBI" id="CHEBI:74269"/>
        <dbReference type="ChEBI" id="CHEBI:74480"/>
        <dbReference type="EC" id="2.1.1.170"/>
    </reaction>
</comment>
<comment type="subcellular location">
    <subcellularLocation>
        <location evidence="2">Cytoplasm</location>
    </subcellularLocation>
</comment>
<comment type="disruption phenotype">
    <text evidence="3">Low-level streptomycin resistance.</text>
</comment>
<comment type="similarity">
    <text evidence="2">Belongs to the methyltransferase superfamily. RNA methyltransferase RsmG family.</text>
</comment>
<comment type="sequence caution" evidence="4">
    <conflict type="erroneous initiation">
        <sequence resource="EMBL-CDS" id="CAB89206"/>
    </conflict>
    <text>Truncated N-terminus.</text>
</comment>
<protein>
    <recommendedName>
        <fullName evidence="2">Ribosomal RNA small subunit methyltransferase G</fullName>
        <ecNumber evidence="2">2.1.1.170</ecNumber>
    </recommendedName>
    <alternativeName>
        <fullName evidence="2">16S rRNA 7-methylguanosine methyltransferase</fullName>
        <shortName evidence="2">16S rRNA m7G methyltransferase</shortName>
    </alternativeName>
    <alternativeName>
        <fullName>Glucose-inhibited division protein B</fullName>
    </alternativeName>
</protein>
<gene>
    <name evidence="2" type="primary">rsmG</name>
    <name type="synonym">gidB</name>
    <name type="ordered locus">TTHA1971</name>
</gene>
<feature type="chain" id="PRO_0000184358" description="Ribosomal RNA small subunit methyltransferase G">
    <location>
        <begin position="1"/>
        <end position="249"/>
    </location>
</feature>
<feature type="region of interest" description="RNA binding" evidence="1">
    <location>
        <begin position="245"/>
        <end position="246"/>
    </location>
</feature>
<feature type="binding site">
    <location>
        <position position="88"/>
    </location>
    <ligand>
        <name>S-adenosyl-L-methionine</name>
        <dbReference type="ChEBI" id="CHEBI:59789"/>
    </ligand>
</feature>
<feature type="binding site">
    <location>
        <position position="93"/>
    </location>
    <ligand>
        <name>S-adenosyl-L-methionine</name>
        <dbReference type="ChEBI" id="CHEBI:59789"/>
    </ligand>
</feature>
<feature type="binding site">
    <location>
        <begin position="111"/>
        <end position="113"/>
    </location>
    <ligand>
        <name>S-adenosyl-L-methionine</name>
        <dbReference type="ChEBI" id="CHEBI:59789"/>
    </ligand>
</feature>
<feature type="binding site">
    <location>
        <begin position="139"/>
        <end position="140"/>
    </location>
    <ligand>
        <name>S-adenosyl-L-methionine</name>
        <dbReference type="ChEBI" id="CHEBI:59789"/>
    </ligand>
</feature>
<feature type="binding site">
    <location>
        <position position="158"/>
    </location>
    <ligand>
        <name>S-adenosyl-L-methionine</name>
        <dbReference type="ChEBI" id="CHEBI:59789"/>
    </ligand>
</feature>
<feature type="disulfide bond" evidence="3">
    <location>
        <begin position="164"/>
        <end position="249"/>
    </location>
</feature>
<feature type="sequence conflict" description="In Ref. 1; CAB89206." evidence="4" ref="1">
    <original>ALERLGGRLGEVLALQLPLSGEAR</original>
    <variation>LWSGSAGGLGRSSPSKLPSPGRRC</variation>
    <location>
        <begin position="198"/>
        <end position="221"/>
    </location>
</feature>
<feature type="sequence conflict" description="In Ref. 1; CAB89206." evidence="4" ref="1">
    <original>T</original>
    <variation>R</variation>
    <location>
        <position position="229"/>
    </location>
</feature>
<feature type="strand" evidence="5">
    <location>
        <begin position="7"/>
        <end position="9"/>
    </location>
</feature>
<feature type="helix" evidence="6">
    <location>
        <begin position="12"/>
        <end position="24"/>
    </location>
</feature>
<feature type="helix" evidence="6">
    <location>
        <begin position="30"/>
        <end position="32"/>
    </location>
</feature>
<feature type="helix" evidence="6">
    <location>
        <begin position="33"/>
        <end position="45"/>
    </location>
</feature>
<feature type="helix" evidence="6">
    <location>
        <begin position="58"/>
        <end position="70"/>
    </location>
</feature>
<feature type="helix" evidence="6">
    <location>
        <begin position="71"/>
        <end position="74"/>
    </location>
</feature>
<feature type="strand" evidence="6">
    <location>
        <begin position="83"/>
        <end position="87"/>
    </location>
</feature>
<feature type="turn" evidence="6">
    <location>
        <begin position="90"/>
        <end position="94"/>
    </location>
</feature>
<feature type="helix" evidence="6">
    <location>
        <begin position="95"/>
        <end position="101"/>
    </location>
</feature>
<feature type="strand" evidence="6">
    <location>
        <begin position="106"/>
        <end position="112"/>
    </location>
</feature>
<feature type="helix" evidence="6">
    <location>
        <begin position="114"/>
        <end position="127"/>
    </location>
</feature>
<feature type="strand" evidence="6">
    <location>
        <begin position="130"/>
        <end position="136"/>
    </location>
</feature>
<feature type="helix" evidence="6">
    <location>
        <begin position="139"/>
        <end position="142"/>
    </location>
</feature>
<feature type="turn" evidence="6">
    <location>
        <begin position="146"/>
        <end position="150"/>
    </location>
</feature>
<feature type="strand" evidence="6">
    <location>
        <begin position="152"/>
        <end position="160"/>
    </location>
</feature>
<feature type="helix" evidence="6">
    <location>
        <begin position="163"/>
        <end position="170"/>
    </location>
</feature>
<feature type="helix" evidence="6">
    <location>
        <begin position="171"/>
        <end position="173"/>
    </location>
</feature>
<feature type="strand" evidence="6">
    <location>
        <begin position="174"/>
        <end position="184"/>
    </location>
</feature>
<feature type="helix" evidence="6">
    <location>
        <begin position="189"/>
        <end position="192"/>
    </location>
</feature>
<feature type="helix" evidence="6">
    <location>
        <begin position="195"/>
        <end position="201"/>
    </location>
</feature>
<feature type="strand" evidence="6">
    <location>
        <begin position="204"/>
        <end position="213"/>
    </location>
</feature>
<feature type="turn" evidence="6">
    <location>
        <begin position="215"/>
        <end position="217"/>
    </location>
</feature>
<feature type="strand" evidence="6">
    <location>
        <begin position="220"/>
        <end position="228"/>
    </location>
</feature>
<feature type="helix" evidence="6">
    <location>
        <begin position="242"/>
        <end position="245"/>
    </location>
</feature>
<proteinExistence type="evidence at protein level"/>
<evidence type="ECO:0000255" key="1"/>
<evidence type="ECO:0000255" key="2">
    <source>
        <dbReference type="HAMAP-Rule" id="MF_00074"/>
    </source>
</evidence>
<evidence type="ECO:0000269" key="3">
    <source>
    </source>
</evidence>
<evidence type="ECO:0000305" key="4"/>
<evidence type="ECO:0007829" key="5">
    <source>
        <dbReference type="PDB" id="3G88"/>
    </source>
</evidence>
<evidence type="ECO:0007829" key="6">
    <source>
        <dbReference type="PDB" id="3G89"/>
    </source>
</evidence>
<accession>Q9LCY2</accession>
<accession>Q5SGV9</accession>